<proteinExistence type="inferred from homology"/>
<protein>
    <recommendedName>
        <fullName evidence="1">UPF0102 protein Pput_4400</fullName>
    </recommendedName>
</protein>
<name>Y4400_PSEP1</name>
<comment type="similarity">
    <text evidence="1">Belongs to the UPF0102 family.</text>
</comment>
<sequence length="123" mass="13570">MAAASPTRAGQAAETQALEYLQGQGLQLLARNWRCKGGELDLVMLDADTVVFVEVRYRLHAGFGGALDSIDGRKQKRLVLAASLFLQKEAHWGNHPCRFDVVALQGSHHAGRPLQWLKNAFEC</sequence>
<organism>
    <name type="scientific">Pseudomonas putida (strain ATCC 700007 / DSM 6899 / JCM 31910 / BCRC 17059 / LMG 24140 / F1)</name>
    <dbReference type="NCBI Taxonomy" id="351746"/>
    <lineage>
        <taxon>Bacteria</taxon>
        <taxon>Pseudomonadati</taxon>
        <taxon>Pseudomonadota</taxon>
        <taxon>Gammaproteobacteria</taxon>
        <taxon>Pseudomonadales</taxon>
        <taxon>Pseudomonadaceae</taxon>
        <taxon>Pseudomonas</taxon>
    </lineage>
</organism>
<gene>
    <name type="ordered locus">Pput_4400</name>
</gene>
<reference key="1">
    <citation type="submission" date="2007-05" db="EMBL/GenBank/DDBJ databases">
        <title>Complete sequence of Pseudomonas putida F1.</title>
        <authorList>
            <consortium name="US DOE Joint Genome Institute"/>
            <person name="Copeland A."/>
            <person name="Lucas S."/>
            <person name="Lapidus A."/>
            <person name="Barry K."/>
            <person name="Detter J.C."/>
            <person name="Glavina del Rio T."/>
            <person name="Hammon N."/>
            <person name="Israni S."/>
            <person name="Dalin E."/>
            <person name="Tice H."/>
            <person name="Pitluck S."/>
            <person name="Chain P."/>
            <person name="Malfatti S."/>
            <person name="Shin M."/>
            <person name="Vergez L."/>
            <person name="Schmutz J."/>
            <person name="Larimer F."/>
            <person name="Land M."/>
            <person name="Hauser L."/>
            <person name="Kyrpides N."/>
            <person name="Lykidis A."/>
            <person name="Parales R."/>
            <person name="Richardson P."/>
        </authorList>
    </citation>
    <scope>NUCLEOTIDE SEQUENCE [LARGE SCALE GENOMIC DNA]</scope>
    <source>
        <strain>ATCC 700007 / DSM 6899 / JCM 31910 / BCRC 17059 / LMG 24140 / F1</strain>
    </source>
</reference>
<feature type="chain" id="PRO_0000336232" description="UPF0102 protein Pput_4400">
    <location>
        <begin position="1"/>
        <end position="123"/>
    </location>
</feature>
<accession>A5W8R2</accession>
<dbReference type="EMBL" id="CP000712">
    <property type="protein sequence ID" value="ABQ80522.1"/>
    <property type="molecule type" value="Genomic_DNA"/>
</dbReference>
<dbReference type="SMR" id="A5W8R2"/>
<dbReference type="KEGG" id="ppf:Pput_4400"/>
<dbReference type="eggNOG" id="COG0792">
    <property type="taxonomic scope" value="Bacteria"/>
</dbReference>
<dbReference type="HOGENOM" id="CLU_115353_1_0_6"/>
<dbReference type="GO" id="GO:0003676">
    <property type="term" value="F:nucleic acid binding"/>
    <property type="evidence" value="ECO:0007669"/>
    <property type="project" value="InterPro"/>
</dbReference>
<dbReference type="CDD" id="cd20736">
    <property type="entry name" value="PoNe_Nuclease"/>
    <property type="match status" value="1"/>
</dbReference>
<dbReference type="Gene3D" id="3.40.1350.10">
    <property type="match status" value="1"/>
</dbReference>
<dbReference type="HAMAP" id="MF_00048">
    <property type="entry name" value="UPF0102"/>
    <property type="match status" value="1"/>
</dbReference>
<dbReference type="InterPro" id="IPR011335">
    <property type="entry name" value="Restrct_endonuc-II-like"/>
</dbReference>
<dbReference type="InterPro" id="IPR011856">
    <property type="entry name" value="tRNA_endonuc-like_dom_sf"/>
</dbReference>
<dbReference type="InterPro" id="IPR003509">
    <property type="entry name" value="UPF0102_YraN-like"/>
</dbReference>
<dbReference type="NCBIfam" id="NF009150">
    <property type="entry name" value="PRK12497.1-3"/>
    <property type="match status" value="1"/>
</dbReference>
<dbReference type="NCBIfam" id="TIGR00252">
    <property type="entry name" value="YraN family protein"/>
    <property type="match status" value="1"/>
</dbReference>
<dbReference type="PANTHER" id="PTHR34039">
    <property type="entry name" value="UPF0102 PROTEIN YRAN"/>
    <property type="match status" value="1"/>
</dbReference>
<dbReference type="PANTHER" id="PTHR34039:SF1">
    <property type="entry name" value="UPF0102 PROTEIN YRAN"/>
    <property type="match status" value="1"/>
</dbReference>
<dbReference type="Pfam" id="PF02021">
    <property type="entry name" value="UPF0102"/>
    <property type="match status" value="1"/>
</dbReference>
<dbReference type="SUPFAM" id="SSF52980">
    <property type="entry name" value="Restriction endonuclease-like"/>
    <property type="match status" value="1"/>
</dbReference>
<evidence type="ECO:0000255" key="1">
    <source>
        <dbReference type="HAMAP-Rule" id="MF_00048"/>
    </source>
</evidence>